<keyword id="KW-0119">Carbohydrate metabolism</keyword>
<keyword id="KW-0479">Metal-binding</keyword>
<keyword id="KW-0520">NAD</keyword>
<keyword id="KW-0560">Oxidoreductase</keyword>
<proteinExistence type="inferred from homology"/>
<organism>
    <name type="scientific">Clostridium botulinum (strain Kyoto / Type A2)</name>
    <dbReference type="NCBI Taxonomy" id="536232"/>
    <lineage>
        <taxon>Bacteria</taxon>
        <taxon>Bacillati</taxon>
        <taxon>Bacillota</taxon>
        <taxon>Clostridia</taxon>
        <taxon>Eubacteriales</taxon>
        <taxon>Clostridiaceae</taxon>
        <taxon>Clostridium</taxon>
    </lineage>
</organism>
<accession>C1FQK1</accession>
<protein>
    <recommendedName>
        <fullName evidence="2">Putative D-threonate 4-phosphate dehydrogenase</fullName>
        <ecNumber evidence="2">1.1.1.408</ecNumber>
    </recommendedName>
</protein>
<evidence type="ECO:0000250" key="1">
    <source>
        <dbReference type="UniProtKB" id="P19624"/>
    </source>
</evidence>
<evidence type="ECO:0000250" key="2">
    <source>
        <dbReference type="UniProtKB" id="P58718"/>
    </source>
</evidence>
<evidence type="ECO:0000305" key="3"/>
<comment type="function">
    <text evidence="2">Catalyzes the NAD-dependent oxidation and subsequent decarboxylation of D-threonate 4-phosphate to produce dihydroxyacetone phosphate (DHAP).</text>
</comment>
<comment type="catalytic activity">
    <reaction evidence="2">
        <text>4-O-phospho-D-threonate + NAD(+) = dihydroxyacetone phosphate + CO2 + NADH</text>
        <dbReference type="Rhea" id="RHEA:52396"/>
        <dbReference type="ChEBI" id="CHEBI:16526"/>
        <dbReference type="ChEBI" id="CHEBI:57540"/>
        <dbReference type="ChEBI" id="CHEBI:57642"/>
        <dbReference type="ChEBI" id="CHEBI:57945"/>
        <dbReference type="ChEBI" id="CHEBI:136590"/>
        <dbReference type="EC" id="1.1.1.408"/>
    </reaction>
</comment>
<comment type="cofactor">
    <cofactor evidence="1">
        <name>a divalent metal cation</name>
        <dbReference type="ChEBI" id="CHEBI:60240"/>
    </cofactor>
    <text evidence="1">Binds 1 divalent metal cation per subunit.</text>
</comment>
<comment type="subunit">
    <text evidence="2">Homodimer.</text>
</comment>
<comment type="similarity">
    <text evidence="3">Belongs to the PdxA family. PdxA2 subfamily.</text>
</comment>
<sequence length="334" mass="36273">MINNKPIIGIPIGDPAGVGPEIVVKSLTEAEVYEKCNPILIGDAKVIKQAMGFCNVNLNINSIKKADEGKFTLGTIDLIDLNNIDIDELKIGKVQGIAGKAAFEYIKKSVEMAKEGELDAIATTPINKESLREGNVNYIGHTEILADLTDTEDPLTMFEVRGMRVFFLTRHVSLRKACDLVTKERVLDYIIRCSEALEKLGVKDGKMAVAGLNPHSGEHGLFGDEEMKAVVPAIEEAQKMGYKVEGPIGADSVFHLALKGRYNSVLSLYHDQGHIATKTLDFERTIAVTNGMPILRTSVDHGTAFDIAGTGQASSVSMVEAIILAAKYSPKFKK</sequence>
<gene>
    <name type="primary">pdxA</name>
    <name type="ordered locus">CLM_2409</name>
</gene>
<dbReference type="EC" id="1.1.1.408" evidence="2"/>
<dbReference type="EMBL" id="CP001581">
    <property type="protein sequence ID" value="ACO86741.1"/>
    <property type="molecule type" value="Genomic_DNA"/>
</dbReference>
<dbReference type="RefSeq" id="WP_012047748.1">
    <property type="nucleotide sequence ID" value="NC_012563.1"/>
</dbReference>
<dbReference type="SMR" id="C1FQK1"/>
<dbReference type="GeneID" id="5186463"/>
<dbReference type="KEGG" id="cby:CLM_2409"/>
<dbReference type="eggNOG" id="COG1995">
    <property type="taxonomic scope" value="Bacteria"/>
</dbReference>
<dbReference type="HOGENOM" id="CLU_040168_0_1_9"/>
<dbReference type="Proteomes" id="UP000001374">
    <property type="component" value="Chromosome"/>
</dbReference>
<dbReference type="GO" id="GO:0046872">
    <property type="term" value="F:metal ion binding"/>
    <property type="evidence" value="ECO:0007669"/>
    <property type="project" value="UniProtKB-KW"/>
</dbReference>
<dbReference type="GO" id="GO:0051287">
    <property type="term" value="F:NAD binding"/>
    <property type="evidence" value="ECO:0007669"/>
    <property type="project" value="InterPro"/>
</dbReference>
<dbReference type="GO" id="GO:0016491">
    <property type="term" value="F:oxidoreductase activity"/>
    <property type="evidence" value="ECO:0007669"/>
    <property type="project" value="UniProtKB-KW"/>
</dbReference>
<dbReference type="Gene3D" id="3.40.718.10">
    <property type="entry name" value="Isopropylmalate Dehydrogenase"/>
    <property type="match status" value="1"/>
</dbReference>
<dbReference type="InterPro" id="IPR005255">
    <property type="entry name" value="PdxA_fam"/>
</dbReference>
<dbReference type="NCBIfam" id="TIGR00557">
    <property type="entry name" value="pdxA"/>
    <property type="match status" value="1"/>
</dbReference>
<dbReference type="NCBIfam" id="NF002992">
    <property type="entry name" value="PRK03743.1"/>
    <property type="match status" value="1"/>
</dbReference>
<dbReference type="PANTHER" id="PTHR30004">
    <property type="entry name" value="4-HYDROXYTHREONINE-4-PHOSPHATE DEHYDROGENASE"/>
    <property type="match status" value="1"/>
</dbReference>
<dbReference type="PANTHER" id="PTHR30004:SF6">
    <property type="entry name" value="D-THREONATE 4-PHOSPHATE DEHYDROGENASE"/>
    <property type="match status" value="1"/>
</dbReference>
<dbReference type="Pfam" id="PF04166">
    <property type="entry name" value="PdxA"/>
    <property type="match status" value="1"/>
</dbReference>
<dbReference type="SUPFAM" id="SSF53659">
    <property type="entry name" value="Isocitrate/Isopropylmalate dehydrogenase-like"/>
    <property type="match status" value="1"/>
</dbReference>
<reference key="1">
    <citation type="submission" date="2008-10" db="EMBL/GenBank/DDBJ databases">
        <title>Genome sequence of Clostridium botulinum A2 Kyoto.</title>
        <authorList>
            <person name="Shrivastava S."/>
            <person name="Brinkac L.M."/>
            <person name="Brown J.L."/>
            <person name="Bruce D."/>
            <person name="Detter C.C."/>
            <person name="Johnson E.A."/>
            <person name="Munk C.A."/>
            <person name="Smith L.A."/>
            <person name="Smith T.J."/>
            <person name="Sutton G."/>
            <person name="Brettin T.S."/>
        </authorList>
    </citation>
    <scope>NUCLEOTIDE SEQUENCE [LARGE SCALE GENOMIC DNA]</scope>
    <source>
        <strain>Kyoto / Type A2</strain>
    </source>
</reference>
<feature type="chain" id="PRO_1000146486" description="Putative D-threonate 4-phosphate dehydrogenase">
    <location>
        <begin position="1"/>
        <end position="334"/>
    </location>
</feature>
<feature type="binding site" evidence="1">
    <location>
        <position position="141"/>
    </location>
    <ligand>
        <name>substrate</name>
    </ligand>
</feature>
<feature type="binding site" evidence="1">
    <location>
        <position position="142"/>
    </location>
    <ligand>
        <name>substrate</name>
    </ligand>
</feature>
<feature type="binding site" evidence="1">
    <location>
        <position position="171"/>
    </location>
    <ligand>
        <name>a divalent metal cation</name>
        <dbReference type="ChEBI" id="CHEBI:60240"/>
        <note>ligand shared between dimeric partners</note>
    </ligand>
</feature>
<feature type="binding site" evidence="1">
    <location>
        <position position="215"/>
    </location>
    <ligand>
        <name>a divalent metal cation</name>
        <dbReference type="ChEBI" id="CHEBI:60240"/>
        <note>ligand shared between dimeric partners</note>
    </ligand>
</feature>
<feature type="binding site" evidence="1">
    <location>
        <position position="270"/>
    </location>
    <ligand>
        <name>a divalent metal cation</name>
        <dbReference type="ChEBI" id="CHEBI:60240"/>
        <note>ligand shared between dimeric partners</note>
    </ligand>
</feature>
<feature type="binding site" evidence="1">
    <location>
        <position position="278"/>
    </location>
    <ligand>
        <name>substrate</name>
    </ligand>
</feature>
<feature type="binding site" evidence="1">
    <location>
        <position position="296"/>
    </location>
    <ligand>
        <name>substrate</name>
    </ligand>
</feature>
<name>PDXA2_CLOBJ</name>